<evidence type="ECO:0000250" key="1"/>
<evidence type="ECO:0000255" key="2">
    <source>
        <dbReference type="PROSITE-ProRule" id="PRU01008"/>
    </source>
</evidence>
<evidence type="ECO:0000305" key="3"/>
<sequence length="422" mass="46937">MTVKTTVSTKDIDEAFLRLKDIVKETPLQLDHYLSQKYDCKVYLKREDLQWVRSFKLRGAYNAISVLSDEAKSKGITCASAGNHAQGVAYTAKKLNLNAVIFMPVTTPLQKVNQVKFFGNSNVEVVLTGDTFDHCLAEALTYTSEHQMNFIDPFNNVHTISGQGTLAKEMLEQAKSDNVNFDYLFAAIGGGGLISGISTYFKTYSPTTKIIGVEPSGASSMYESVVVNNQVVTLPNIDKFVDGASVARVGDITFEIAKENVDDYVQVDEGAVCSTILDMYSKQAIVAEPAGALSVSALENYKDHIKGKTVVCVISGGNNDINRMKEIEERSLLYEEMKHYFILNFPQRPGALREFVNDVLGPQDDITKFEYLKKSSQNTGTVIIGIQLKDHDDLIQLKQRVNHFDPSNIYINENKMLYSLLI</sequence>
<comment type="function">
    <text evidence="1">Catalyzes the anaerobic formation of alpha-ketobutyrate and ammonia from threonine in a two-step reaction. The first step involved a dehydration of threonine and a production of enamine intermediates (aminocrotonate), which tautomerizes to its imine form (iminobutyrate). Both intermediates are unstable and short-lived. The second step is the nonenzymatic hydrolysis of the enamine/imine intermediates to form 2-ketobutyrate and free ammonia. In the low water environment of the cell, the second step is accelerated by RidA (By similarity).</text>
</comment>
<comment type="catalytic activity">
    <reaction>
        <text>L-threonine = 2-oxobutanoate + NH4(+)</text>
        <dbReference type="Rhea" id="RHEA:22108"/>
        <dbReference type="ChEBI" id="CHEBI:16763"/>
        <dbReference type="ChEBI" id="CHEBI:28938"/>
        <dbReference type="ChEBI" id="CHEBI:57926"/>
        <dbReference type="EC" id="4.3.1.19"/>
    </reaction>
</comment>
<comment type="cofactor">
    <cofactor evidence="1">
        <name>pyridoxal 5'-phosphate</name>
        <dbReference type="ChEBI" id="CHEBI:597326"/>
    </cofactor>
</comment>
<comment type="pathway">
    <text>Amino-acid biosynthesis; L-isoleucine biosynthesis; 2-oxobutanoate from L-threonine: step 1/1.</text>
</comment>
<comment type="subunit">
    <text evidence="1">Homotetramer.</text>
</comment>
<comment type="similarity">
    <text evidence="3">Belongs to the serine/threonine dehydratase family.</text>
</comment>
<gene>
    <name type="primary">ilvA</name>
    <name type="ordered locus">SACOL2050</name>
</gene>
<keyword id="KW-0028">Amino-acid biosynthesis</keyword>
<keyword id="KW-0100">Branched-chain amino acid biosynthesis</keyword>
<keyword id="KW-0412">Isoleucine biosynthesis</keyword>
<keyword id="KW-0456">Lyase</keyword>
<keyword id="KW-0663">Pyridoxal phosphate</keyword>
<accession>Q5HEE0</accession>
<feature type="chain" id="PRO_0000234306" description="L-threonine dehydratase biosynthetic IlvA">
    <location>
        <begin position="1"/>
        <end position="422"/>
    </location>
</feature>
<feature type="domain" description="ACT-like" evidence="2">
    <location>
        <begin position="339"/>
        <end position="413"/>
    </location>
</feature>
<feature type="binding site" evidence="1">
    <location>
        <position position="83"/>
    </location>
    <ligand>
        <name>pyridoxal 5'-phosphate</name>
        <dbReference type="ChEBI" id="CHEBI:597326"/>
    </ligand>
</feature>
<feature type="binding site" evidence="1">
    <location>
        <begin position="189"/>
        <end position="193"/>
    </location>
    <ligand>
        <name>pyridoxal 5'-phosphate</name>
        <dbReference type="ChEBI" id="CHEBI:597326"/>
    </ligand>
</feature>
<feature type="binding site" evidence="1">
    <location>
        <position position="315"/>
    </location>
    <ligand>
        <name>pyridoxal 5'-phosphate</name>
        <dbReference type="ChEBI" id="CHEBI:597326"/>
    </ligand>
</feature>
<feature type="modified residue" description="N6-(pyridoxal phosphate)lysine" evidence="1">
    <location>
        <position position="56"/>
    </location>
</feature>
<proteinExistence type="inferred from homology"/>
<protein>
    <recommendedName>
        <fullName>L-threonine dehydratase biosynthetic IlvA</fullName>
        <ecNumber>4.3.1.19</ecNumber>
    </recommendedName>
    <alternativeName>
        <fullName>Threonine deaminase</fullName>
    </alternativeName>
</protein>
<dbReference type="EC" id="4.3.1.19"/>
<dbReference type="EMBL" id="CP000046">
    <property type="protein sequence ID" value="AAW37013.1"/>
    <property type="molecule type" value="Genomic_DNA"/>
</dbReference>
<dbReference type="RefSeq" id="WP_000216853.1">
    <property type="nucleotide sequence ID" value="NZ_JBGOFO010000006.1"/>
</dbReference>
<dbReference type="SMR" id="Q5HEE0"/>
<dbReference type="KEGG" id="sac:SACOL2050"/>
<dbReference type="HOGENOM" id="CLU_021152_4_2_9"/>
<dbReference type="UniPathway" id="UPA00047">
    <property type="reaction ID" value="UER00054"/>
</dbReference>
<dbReference type="Proteomes" id="UP000000530">
    <property type="component" value="Chromosome"/>
</dbReference>
<dbReference type="GO" id="GO:0003941">
    <property type="term" value="F:L-serine ammonia-lyase activity"/>
    <property type="evidence" value="ECO:0007669"/>
    <property type="project" value="TreeGrafter"/>
</dbReference>
<dbReference type="GO" id="GO:0030170">
    <property type="term" value="F:pyridoxal phosphate binding"/>
    <property type="evidence" value="ECO:0007669"/>
    <property type="project" value="InterPro"/>
</dbReference>
<dbReference type="GO" id="GO:0004794">
    <property type="term" value="F:threonine deaminase activity"/>
    <property type="evidence" value="ECO:0007669"/>
    <property type="project" value="UniProtKB-EC"/>
</dbReference>
<dbReference type="GO" id="GO:0009097">
    <property type="term" value="P:isoleucine biosynthetic process"/>
    <property type="evidence" value="ECO:0007669"/>
    <property type="project" value="UniProtKB-UniPathway"/>
</dbReference>
<dbReference type="GO" id="GO:0006565">
    <property type="term" value="P:L-serine catabolic process"/>
    <property type="evidence" value="ECO:0007669"/>
    <property type="project" value="TreeGrafter"/>
</dbReference>
<dbReference type="GO" id="GO:0006567">
    <property type="term" value="P:threonine catabolic process"/>
    <property type="evidence" value="ECO:0007669"/>
    <property type="project" value="TreeGrafter"/>
</dbReference>
<dbReference type="GO" id="GO:0006566">
    <property type="term" value="P:threonine metabolic process"/>
    <property type="evidence" value="ECO:0000250"/>
    <property type="project" value="UniProtKB"/>
</dbReference>
<dbReference type="CDD" id="cd04907">
    <property type="entry name" value="ACT_ThrD-I_2"/>
    <property type="match status" value="1"/>
</dbReference>
<dbReference type="CDD" id="cd01562">
    <property type="entry name" value="Thr-dehyd"/>
    <property type="match status" value="1"/>
</dbReference>
<dbReference type="FunFam" id="3.40.1020.10:FF:000002">
    <property type="entry name" value="L-threonine dehydratase"/>
    <property type="match status" value="1"/>
</dbReference>
<dbReference type="FunFam" id="3.40.50.1100:FF:000005">
    <property type="entry name" value="Threonine dehydratase catabolic"/>
    <property type="match status" value="1"/>
</dbReference>
<dbReference type="Gene3D" id="3.40.50.1100">
    <property type="match status" value="2"/>
</dbReference>
<dbReference type="Gene3D" id="3.40.1020.10">
    <property type="entry name" value="Biosynthetic Threonine Deaminase, Domain 3"/>
    <property type="match status" value="1"/>
</dbReference>
<dbReference type="InterPro" id="IPR045865">
    <property type="entry name" value="ACT-like_dom_sf"/>
</dbReference>
<dbReference type="InterPro" id="IPR011820">
    <property type="entry name" value="IlvA"/>
</dbReference>
<dbReference type="InterPro" id="IPR050147">
    <property type="entry name" value="Ser/Thr_Dehydratase"/>
</dbReference>
<dbReference type="InterPro" id="IPR000634">
    <property type="entry name" value="Ser/Thr_deHydtase_PyrdxlP-BS"/>
</dbReference>
<dbReference type="InterPro" id="IPR001721">
    <property type="entry name" value="TD_ACT-like"/>
</dbReference>
<dbReference type="InterPro" id="IPR038110">
    <property type="entry name" value="TD_ACT-like_sf"/>
</dbReference>
<dbReference type="InterPro" id="IPR001926">
    <property type="entry name" value="TrpB-like_PALP"/>
</dbReference>
<dbReference type="InterPro" id="IPR036052">
    <property type="entry name" value="TrpB-like_PALP_sf"/>
</dbReference>
<dbReference type="NCBIfam" id="NF006390">
    <property type="entry name" value="PRK08639.1"/>
    <property type="match status" value="1"/>
</dbReference>
<dbReference type="NCBIfam" id="TIGR02079">
    <property type="entry name" value="THD1"/>
    <property type="match status" value="1"/>
</dbReference>
<dbReference type="PANTHER" id="PTHR48078:SF11">
    <property type="entry name" value="THREONINE DEHYDRATASE, MITOCHONDRIAL"/>
    <property type="match status" value="1"/>
</dbReference>
<dbReference type="PANTHER" id="PTHR48078">
    <property type="entry name" value="THREONINE DEHYDRATASE, MITOCHONDRIAL-RELATED"/>
    <property type="match status" value="1"/>
</dbReference>
<dbReference type="Pfam" id="PF00291">
    <property type="entry name" value="PALP"/>
    <property type="match status" value="1"/>
</dbReference>
<dbReference type="Pfam" id="PF00585">
    <property type="entry name" value="Thr_dehydrat_C"/>
    <property type="match status" value="1"/>
</dbReference>
<dbReference type="SUPFAM" id="SSF55021">
    <property type="entry name" value="ACT-like"/>
    <property type="match status" value="1"/>
</dbReference>
<dbReference type="SUPFAM" id="SSF53686">
    <property type="entry name" value="Tryptophan synthase beta subunit-like PLP-dependent enzymes"/>
    <property type="match status" value="1"/>
</dbReference>
<dbReference type="PROSITE" id="PS51672">
    <property type="entry name" value="ACT_LIKE"/>
    <property type="match status" value="1"/>
</dbReference>
<dbReference type="PROSITE" id="PS00165">
    <property type="entry name" value="DEHYDRATASE_SER_THR"/>
    <property type="match status" value="1"/>
</dbReference>
<organism>
    <name type="scientific">Staphylococcus aureus (strain COL)</name>
    <dbReference type="NCBI Taxonomy" id="93062"/>
    <lineage>
        <taxon>Bacteria</taxon>
        <taxon>Bacillati</taxon>
        <taxon>Bacillota</taxon>
        <taxon>Bacilli</taxon>
        <taxon>Bacillales</taxon>
        <taxon>Staphylococcaceae</taxon>
        <taxon>Staphylococcus</taxon>
    </lineage>
</organism>
<name>ILVA_STAAC</name>
<reference key="1">
    <citation type="journal article" date="2005" name="J. Bacteriol.">
        <title>Insights on evolution of virulence and resistance from the complete genome analysis of an early methicillin-resistant Staphylococcus aureus strain and a biofilm-producing methicillin-resistant Staphylococcus epidermidis strain.</title>
        <authorList>
            <person name="Gill S.R."/>
            <person name="Fouts D.E."/>
            <person name="Archer G.L."/>
            <person name="Mongodin E.F."/>
            <person name="DeBoy R.T."/>
            <person name="Ravel J."/>
            <person name="Paulsen I.T."/>
            <person name="Kolonay J.F."/>
            <person name="Brinkac L.M."/>
            <person name="Beanan M.J."/>
            <person name="Dodson R.J."/>
            <person name="Daugherty S.C."/>
            <person name="Madupu R."/>
            <person name="Angiuoli S.V."/>
            <person name="Durkin A.S."/>
            <person name="Haft D.H."/>
            <person name="Vamathevan J.J."/>
            <person name="Khouri H."/>
            <person name="Utterback T.R."/>
            <person name="Lee C."/>
            <person name="Dimitrov G."/>
            <person name="Jiang L."/>
            <person name="Qin H."/>
            <person name="Weidman J."/>
            <person name="Tran K."/>
            <person name="Kang K.H."/>
            <person name="Hance I.R."/>
            <person name="Nelson K.E."/>
            <person name="Fraser C.M."/>
        </authorList>
    </citation>
    <scope>NUCLEOTIDE SEQUENCE [LARGE SCALE GENOMIC DNA]</scope>
    <source>
        <strain>COL</strain>
    </source>
</reference>